<feature type="chain" id="PRO_0000207896" description="Protein PsbN">
    <location>
        <begin position="1"/>
        <end position="43"/>
    </location>
</feature>
<feature type="transmembrane region" description="Helical" evidence="1">
    <location>
        <begin position="5"/>
        <end position="27"/>
    </location>
</feature>
<sequence length="43" mass="4636">METATLVAISISGSLVSFTGYALYTAFGQPSQQLRDPFEEHGD</sequence>
<name>PSBN_DRIWI</name>
<gene>
    <name evidence="1" type="primary">psbN</name>
</gene>
<keyword id="KW-0150">Chloroplast</keyword>
<keyword id="KW-0472">Membrane</keyword>
<keyword id="KW-0934">Plastid</keyword>
<keyword id="KW-0793">Thylakoid</keyword>
<keyword id="KW-0812">Transmembrane</keyword>
<keyword id="KW-1133">Transmembrane helix</keyword>
<evidence type="ECO:0000255" key="1">
    <source>
        <dbReference type="HAMAP-Rule" id="MF_00293"/>
    </source>
</evidence>
<reference key="1">
    <citation type="journal article" date="2000" name="Am. J. Bot.">
        <title>Utility of 17 chloroplast genes for inferring the phylogeny of the basal angiosperms.</title>
        <authorList>
            <person name="Graham S.W."/>
            <person name="Olmstead R.G."/>
        </authorList>
    </citation>
    <scope>NUCLEOTIDE SEQUENCE [GENOMIC DNA]</scope>
</reference>
<proteinExistence type="inferred from homology"/>
<organism>
    <name type="scientific">Drimys winteri</name>
    <name type="common">Winter's bark</name>
    <name type="synonym">Drimys chilensis</name>
    <dbReference type="NCBI Taxonomy" id="3419"/>
    <lineage>
        <taxon>Eukaryota</taxon>
        <taxon>Viridiplantae</taxon>
        <taxon>Streptophyta</taxon>
        <taxon>Embryophyta</taxon>
        <taxon>Tracheophyta</taxon>
        <taxon>Spermatophyta</taxon>
        <taxon>Magnoliopsida</taxon>
        <taxon>Magnoliidae</taxon>
        <taxon>Canellales</taxon>
        <taxon>Winteraceae</taxon>
        <taxon>Drimys</taxon>
    </lineage>
</organism>
<protein>
    <recommendedName>
        <fullName evidence="1">Protein PsbN</fullName>
    </recommendedName>
</protein>
<dbReference type="EMBL" id="AF123850">
    <property type="protein sequence ID" value="AAG26279.1"/>
    <property type="molecule type" value="Genomic_DNA"/>
</dbReference>
<dbReference type="SMR" id="Q7J192"/>
<dbReference type="GO" id="GO:0009535">
    <property type="term" value="C:chloroplast thylakoid membrane"/>
    <property type="evidence" value="ECO:0007669"/>
    <property type="project" value="UniProtKB-SubCell"/>
</dbReference>
<dbReference type="GO" id="GO:0015979">
    <property type="term" value="P:photosynthesis"/>
    <property type="evidence" value="ECO:0007669"/>
    <property type="project" value="InterPro"/>
</dbReference>
<dbReference type="HAMAP" id="MF_00293">
    <property type="entry name" value="PSII_PsbN"/>
    <property type="match status" value="1"/>
</dbReference>
<dbReference type="InterPro" id="IPR003398">
    <property type="entry name" value="PSII_PsbN"/>
</dbReference>
<dbReference type="PANTHER" id="PTHR35326">
    <property type="entry name" value="PROTEIN PSBN"/>
    <property type="match status" value="1"/>
</dbReference>
<dbReference type="PANTHER" id="PTHR35326:SF3">
    <property type="entry name" value="PROTEIN PSBN"/>
    <property type="match status" value="1"/>
</dbReference>
<dbReference type="Pfam" id="PF02468">
    <property type="entry name" value="PsbN"/>
    <property type="match status" value="1"/>
</dbReference>
<geneLocation type="chloroplast"/>
<accession>Q7J192</accession>
<comment type="function">
    <text evidence="1">May play a role in photosystem I and II biogenesis.</text>
</comment>
<comment type="subcellular location">
    <subcellularLocation>
        <location evidence="1">Plastid</location>
        <location evidence="1">Chloroplast thylakoid membrane</location>
        <topology evidence="1">Single-pass membrane protein</topology>
    </subcellularLocation>
</comment>
<comment type="similarity">
    <text evidence="1">Belongs to the PsbN family.</text>
</comment>
<comment type="caution">
    <text evidence="1">Originally thought to be a component of PSII; based on experiments in Synechocystis, N.tabacum and barley, and its absence from PSII in T.elongatus and T.vulcanus, this is probably not true.</text>
</comment>